<protein>
    <recommendedName>
        <fullName evidence="6">Protein disulfide isomerase Creld1</fullName>
        <ecNumber evidence="2">5.3.4.1</ecNumber>
    </recommendedName>
    <alternativeName>
        <fullName evidence="6">Cysteine-rich with EGF-like domain protein 1</fullName>
    </alternativeName>
</protein>
<proteinExistence type="evidence at protein level"/>
<accession>Q91XD7</accession>
<accession>Q8BGJ8</accession>
<feature type="signal peptide" evidence="3">
    <location>
        <begin position="1"/>
        <end position="29"/>
    </location>
</feature>
<feature type="chain" id="PRO_0000042782" description="Protein disulfide isomerase Creld1">
    <location>
        <begin position="30"/>
        <end position="420"/>
    </location>
</feature>
<feature type="topological domain" description="Extracellular" evidence="3">
    <location>
        <begin position="30"/>
        <end position="362"/>
    </location>
</feature>
<feature type="transmembrane region" description="Helical" evidence="3">
    <location>
        <begin position="363"/>
        <end position="383"/>
    </location>
</feature>
<feature type="topological domain" description="Cytoplasmic" evidence="3">
    <location>
        <position position="384"/>
    </location>
</feature>
<feature type="transmembrane region" description="Helical" evidence="3">
    <location>
        <begin position="385"/>
        <end position="405"/>
    </location>
</feature>
<feature type="topological domain" description="Extracellular" evidence="3">
    <location>
        <begin position="406"/>
        <end position="420"/>
    </location>
</feature>
<feature type="domain" description="EGF-like 1" evidence="4">
    <location>
        <begin position="153"/>
        <end position="193"/>
    </location>
</feature>
<feature type="repeat" description="FU 1">
    <location>
        <begin position="208"/>
        <end position="255"/>
    </location>
</feature>
<feature type="repeat" description="FU 2">
    <location>
        <begin position="268"/>
        <end position="315"/>
    </location>
</feature>
<feature type="domain" description="EGF-like 2; calcium-binding" evidence="4">
    <location>
        <begin position="305"/>
        <end position="342"/>
    </location>
</feature>
<feature type="short sequence motif" description="CXXC" evidence="1">
    <location>
        <begin position="46"/>
        <end position="49"/>
    </location>
</feature>
<feature type="short sequence motif" description="CXXC" evidence="2">
    <location>
        <begin position="278"/>
        <end position="281"/>
    </location>
</feature>
<feature type="glycosylation site" description="N-linked (GlcNAc...) asparagine" evidence="3">
    <location>
        <position position="205"/>
    </location>
</feature>
<feature type="disulfide bond" description="Redox-active" evidence="2">
    <location>
        <begin position="46"/>
        <end position="49"/>
    </location>
</feature>
<feature type="disulfide bond" evidence="4">
    <location>
        <begin position="155"/>
        <end position="169"/>
    </location>
</feature>
<feature type="disulfide bond" evidence="4">
    <location>
        <begin position="163"/>
        <end position="181"/>
    </location>
</feature>
<feature type="disulfide bond" evidence="4">
    <location>
        <begin position="183"/>
        <end position="192"/>
    </location>
</feature>
<feature type="disulfide bond" description="Redox-active" evidence="2">
    <location>
        <begin position="278"/>
        <end position="281"/>
    </location>
</feature>
<feature type="disulfide bond" evidence="4">
    <location>
        <begin position="309"/>
        <end position="321"/>
    </location>
</feature>
<feature type="disulfide bond" evidence="4">
    <location>
        <begin position="314"/>
        <end position="330"/>
    </location>
</feature>
<feature type="disulfide bond" evidence="4">
    <location>
        <begin position="332"/>
        <end position="343"/>
    </location>
</feature>
<comment type="function">
    <text evidence="2 5">Protein disulfide isomerase (By similarity). Promotes the localization of acetylcholine receptors (AChRs) to the plasma membrane (PubMed:30407909).</text>
</comment>
<comment type="catalytic activity">
    <reaction evidence="2">
        <text>Catalyzes the rearrangement of -S-S- bonds in proteins.</text>
        <dbReference type="EC" id="5.3.4.1"/>
    </reaction>
</comment>
<comment type="subcellular location">
    <subcellularLocation>
        <location evidence="6">Membrane</location>
        <topology evidence="6">Multi-pass membrane protein</topology>
    </subcellularLocation>
</comment>
<comment type="tissue specificity">
    <text evidence="5">Expressed in myoblast C2C12 cells (at protein level).</text>
</comment>
<comment type="similarity">
    <text evidence="6">Belongs to the CRELD family.</text>
</comment>
<organism>
    <name type="scientific">Mus musculus</name>
    <name type="common">Mouse</name>
    <dbReference type="NCBI Taxonomy" id="10090"/>
    <lineage>
        <taxon>Eukaryota</taxon>
        <taxon>Metazoa</taxon>
        <taxon>Chordata</taxon>
        <taxon>Craniata</taxon>
        <taxon>Vertebrata</taxon>
        <taxon>Euteleostomi</taxon>
        <taxon>Mammalia</taxon>
        <taxon>Eutheria</taxon>
        <taxon>Euarchontoglires</taxon>
        <taxon>Glires</taxon>
        <taxon>Rodentia</taxon>
        <taxon>Myomorpha</taxon>
        <taxon>Muroidea</taxon>
        <taxon>Muridae</taxon>
        <taxon>Murinae</taxon>
        <taxon>Mus</taxon>
        <taxon>Mus</taxon>
    </lineage>
</organism>
<name>CREL1_MOUSE</name>
<keyword id="KW-0106">Calcium</keyword>
<keyword id="KW-1015">Disulfide bond</keyword>
<keyword id="KW-0245">EGF-like domain</keyword>
<keyword id="KW-0325">Glycoprotein</keyword>
<keyword id="KW-0413">Isomerase</keyword>
<keyword id="KW-0472">Membrane</keyword>
<keyword id="KW-0676">Redox-active center</keyword>
<keyword id="KW-1185">Reference proteome</keyword>
<keyword id="KW-0677">Repeat</keyword>
<keyword id="KW-0732">Signal</keyword>
<keyword id="KW-0812">Transmembrane</keyword>
<keyword id="KW-1133">Transmembrane helix</keyword>
<sequence length="420" mass="45718">MAPLPPRGLVPSLLWCLSLFLSLPGPVWLQPSPPPHPSPRAEPHPCHTCRALVDNFNKGLERTIRDNFGGGNTAWEEEKLSKYKDSETRLVEVLEGVCSRSDFECHRLLELSEELVENWWFHRQQEAPDLFQWLCSDSLKLCCPSGTFGPSCLPCPGGTERPCGGYGQCEGEGTRGGSGHCDCQAGYGGEACGQCGLGYFEAERNSSHLVCSACFGPCARCTGPEESHCLQCKKGWALHHLKCVDIDECGTEQATCGADQFCVNTEGSYECRDCAKACLGCMGAGPGRCKKCSRGYQQVGSKCLDVDECETVVCPGENEKCENTEGGYRCVCAEGYRQEDGICVKEQVPESAGFFAEMTEDEMVVLQQMFFGVIICALATLAAKGDLVFTAIFIGAVAAMTGYWLSERSDRVLEGFIKGR</sequence>
<dbReference type="EC" id="5.3.4.1" evidence="2"/>
<dbReference type="EMBL" id="AK050160">
    <property type="protein sequence ID" value="BAC34101.1"/>
    <property type="molecule type" value="mRNA"/>
</dbReference>
<dbReference type="EMBL" id="AK050455">
    <property type="protein sequence ID" value="BAC34266.1"/>
    <property type="molecule type" value="mRNA"/>
</dbReference>
<dbReference type="EMBL" id="AK155777">
    <property type="protein sequence ID" value="BAE33433.1"/>
    <property type="molecule type" value="mRNA"/>
</dbReference>
<dbReference type="EMBL" id="BC010804">
    <property type="protein sequence ID" value="AAH10804.1"/>
    <property type="molecule type" value="mRNA"/>
</dbReference>
<dbReference type="EMBL" id="BC023893">
    <property type="protein sequence ID" value="AAH23893.1"/>
    <property type="molecule type" value="mRNA"/>
</dbReference>
<dbReference type="EMBL" id="BC025932">
    <property type="protein sequence ID" value="AAH25932.1"/>
    <property type="molecule type" value="mRNA"/>
</dbReference>
<dbReference type="EMBL" id="BC029065">
    <property type="protein sequence ID" value="AAH29065.1"/>
    <property type="molecule type" value="mRNA"/>
</dbReference>
<dbReference type="CCDS" id="CCDS20423.1"/>
<dbReference type="RefSeq" id="NP_598691.1">
    <property type="nucleotide sequence ID" value="NM_133930.2"/>
</dbReference>
<dbReference type="BioGRID" id="228604">
    <property type="interactions" value="1"/>
</dbReference>
<dbReference type="FunCoup" id="Q91XD7">
    <property type="interactions" value="74"/>
</dbReference>
<dbReference type="STRING" id="10090.ENSMUSP00000032422"/>
<dbReference type="GlyConnect" id="2247">
    <property type="glycosylation" value="2 N-Linked glycans (1 site)"/>
</dbReference>
<dbReference type="GlyCosmos" id="Q91XD7">
    <property type="glycosylation" value="1 site, 2 glycans"/>
</dbReference>
<dbReference type="GlyGen" id="Q91XD7">
    <property type="glycosylation" value="3 sites, 3 N-linked glycans (1 site), 1 O-linked glycan (2 sites)"/>
</dbReference>
<dbReference type="iPTMnet" id="Q91XD7"/>
<dbReference type="PhosphoSitePlus" id="Q91XD7"/>
<dbReference type="SwissPalm" id="Q91XD7"/>
<dbReference type="jPOST" id="Q91XD7"/>
<dbReference type="PaxDb" id="10090-ENSMUSP00000032422"/>
<dbReference type="ProteomicsDB" id="284123"/>
<dbReference type="Antibodypedia" id="25846">
    <property type="antibodies" value="122 antibodies from 24 providers"/>
</dbReference>
<dbReference type="DNASU" id="171508"/>
<dbReference type="Ensembl" id="ENSMUST00000032422.6">
    <property type="protein sequence ID" value="ENSMUSP00000032422.6"/>
    <property type="gene ID" value="ENSMUSG00000030284.14"/>
</dbReference>
<dbReference type="GeneID" id="171508"/>
<dbReference type="KEGG" id="mmu:171508"/>
<dbReference type="UCSC" id="uc009dgo.1">
    <property type="organism name" value="mouse"/>
</dbReference>
<dbReference type="AGR" id="MGI:2152539"/>
<dbReference type="CTD" id="78987"/>
<dbReference type="MGI" id="MGI:2152539">
    <property type="gene designation" value="Creld1"/>
</dbReference>
<dbReference type="VEuPathDB" id="HostDB:ENSMUSG00000030284"/>
<dbReference type="eggNOG" id="KOG4260">
    <property type="taxonomic scope" value="Eukaryota"/>
</dbReference>
<dbReference type="GeneTree" id="ENSGT00940000160255"/>
<dbReference type="HOGENOM" id="CLU_038974_1_1_1"/>
<dbReference type="InParanoid" id="Q91XD7"/>
<dbReference type="OMA" id="HCRANQY"/>
<dbReference type="OrthoDB" id="10045365at2759"/>
<dbReference type="PhylomeDB" id="Q91XD7"/>
<dbReference type="TreeFam" id="TF316507"/>
<dbReference type="BioGRID-ORCS" id="171508">
    <property type="hits" value="9 hits in 81 CRISPR screens"/>
</dbReference>
<dbReference type="ChiTaRS" id="Creld1">
    <property type="organism name" value="mouse"/>
</dbReference>
<dbReference type="PRO" id="PR:Q91XD7"/>
<dbReference type="Proteomes" id="UP000000589">
    <property type="component" value="Chromosome 6"/>
</dbReference>
<dbReference type="RNAct" id="Q91XD7">
    <property type="molecule type" value="protein"/>
</dbReference>
<dbReference type="Bgee" id="ENSMUSG00000030284">
    <property type="expression patterns" value="Expressed in urinary bladder urothelium and 229 other cell types or tissues"/>
</dbReference>
<dbReference type="ExpressionAtlas" id="Q91XD7">
    <property type="expression patterns" value="baseline and differential"/>
</dbReference>
<dbReference type="GO" id="GO:0098978">
    <property type="term" value="C:glutamatergic synapse"/>
    <property type="evidence" value="ECO:0000314"/>
    <property type="project" value="SynGO"/>
</dbReference>
<dbReference type="GO" id="GO:0016020">
    <property type="term" value="C:membrane"/>
    <property type="evidence" value="ECO:0007669"/>
    <property type="project" value="UniProtKB-SubCell"/>
</dbReference>
<dbReference type="GO" id="GO:0045202">
    <property type="term" value="C:synapse"/>
    <property type="evidence" value="ECO:0000314"/>
    <property type="project" value="SynGO"/>
</dbReference>
<dbReference type="GO" id="GO:0005509">
    <property type="term" value="F:calcium ion binding"/>
    <property type="evidence" value="ECO:0007669"/>
    <property type="project" value="InterPro"/>
</dbReference>
<dbReference type="GO" id="GO:0003756">
    <property type="term" value="F:protein disulfide isomerase activity"/>
    <property type="evidence" value="ECO:0007669"/>
    <property type="project" value="UniProtKB-EC"/>
</dbReference>
<dbReference type="CDD" id="cd00054">
    <property type="entry name" value="EGF_CA"/>
    <property type="match status" value="1"/>
</dbReference>
<dbReference type="CDD" id="cd00064">
    <property type="entry name" value="FU"/>
    <property type="match status" value="1"/>
</dbReference>
<dbReference type="Gene3D" id="2.10.25.10">
    <property type="entry name" value="Laminin"/>
    <property type="match status" value="1"/>
</dbReference>
<dbReference type="Gene3D" id="2.90.20.10">
    <property type="entry name" value="Plasmodium vivax P25 domain"/>
    <property type="match status" value="1"/>
</dbReference>
<dbReference type="InterPro" id="IPR021852">
    <property type="entry name" value="DUF3456"/>
</dbReference>
<dbReference type="InterPro" id="IPR050751">
    <property type="entry name" value="ECM_structural_protein"/>
</dbReference>
<dbReference type="InterPro" id="IPR001881">
    <property type="entry name" value="EGF-like_Ca-bd_dom"/>
</dbReference>
<dbReference type="InterPro" id="IPR000742">
    <property type="entry name" value="EGF-like_dom"/>
</dbReference>
<dbReference type="InterPro" id="IPR000152">
    <property type="entry name" value="EGF-type_Asp/Asn_hydroxyl_site"/>
</dbReference>
<dbReference type="InterPro" id="IPR018097">
    <property type="entry name" value="EGF_Ca-bd_CS"/>
</dbReference>
<dbReference type="InterPro" id="IPR006212">
    <property type="entry name" value="Furin_repeat"/>
</dbReference>
<dbReference type="InterPro" id="IPR009030">
    <property type="entry name" value="Growth_fac_rcpt_cys_sf"/>
</dbReference>
<dbReference type="InterPro" id="IPR002049">
    <property type="entry name" value="LE_dom"/>
</dbReference>
<dbReference type="InterPro" id="IPR049883">
    <property type="entry name" value="NOTCH1_EGF-like"/>
</dbReference>
<dbReference type="PANTHER" id="PTHR24034">
    <property type="entry name" value="EGF-LIKE DOMAIN-CONTAINING PROTEIN"/>
    <property type="match status" value="1"/>
</dbReference>
<dbReference type="PANTHER" id="PTHR24034:SF114">
    <property type="entry name" value="PROTEIN DISULFIDE ISOMERASE CRELD1"/>
    <property type="match status" value="1"/>
</dbReference>
<dbReference type="Pfam" id="PF11938">
    <property type="entry name" value="DUF3456"/>
    <property type="match status" value="1"/>
</dbReference>
<dbReference type="Pfam" id="PF07645">
    <property type="entry name" value="EGF_CA"/>
    <property type="match status" value="2"/>
</dbReference>
<dbReference type="SMART" id="SM00181">
    <property type="entry name" value="EGF"/>
    <property type="match status" value="3"/>
</dbReference>
<dbReference type="SMART" id="SM00179">
    <property type="entry name" value="EGF_CA"/>
    <property type="match status" value="2"/>
</dbReference>
<dbReference type="SMART" id="SM00261">
    <property type="entry name" value="FU"/>
    <property type="match status" value="2"/>
</dbReference>
<dbReference type="SUPFAM" id="SSF57184">
    <property type="entry name" value="Growth factor receptor domain"/>
    <property type="match status" value="1"/>
</dbReference>
<dbReference type="PROSITE" id="PS00010">
    <property type="entry name" value="ASX_HYDROXYL"/>
    <property type="match status" value="1"/>
</dbReference>
<dbReference type="PROSITE" id="PS00022">
    <property type="entry name" value="EGF_1"/>
    <property type="match status" value="1"/>
</dbReference>
<dbReference type="PROSITE" id="PS01186">
    <property type="entry name" value="EGF_2"/>
    <property type="match status" value="2"/>
</dbReference>
<dbReference type="PROSITE" id="PS50026">
    <property type="entry name" value="EGF_3"/>
    <property type="match status" value="2"/>
</dbReference>
<dbReference type="PROSITE" id="PS01187">
    <property type="entry name" value="EGF_CA"/>
    <property type="match status" value="2"/>
</dbReference>
<evidence type="ECO:0000250" key="1">
    <source>
        <dbReference type="UniProtKB" id="Q19267"/>
    </source>
</evidence>
<evidence type="ECO:0000250" key="2">
    <source>
        <dbReference type="UniProtKB" id="Q9CYA0"/>
    </source>
</evidence>
<evidence type="ECO:0000255" key="3"/>
<evidence type="ECO:0000255" key="4">
    <source>
        <dbReference type="PROSITE-ProRule" id="PRU00076"/>
    </source>
</evidence>
<evidence type="ECO:0000269" key="5">
    <source>
    </source>
</evidence>
<evidence type="ECO:0000305" key="6"/>
<reference key="1">
    <citation type="journal article" date="2002" name="Gene">
        <title>Identification, genomic organization and mRNA expression of CRELD1, the founding member of a unique family of matricellular proteins.</title>
        <authorList>
            <person name="Rupp P.A."/>
            <person name="Fouad G.T."/>
            <person name="Egelston C.A."/>
            <person name="Reifsteck C.A."/>
            <person name="Olson S.B."/>
            <person name="Knosp W.M."/>
            <person name="Glanville R.W."/>
            <person name="Thornburg K.L."/>
            <person name="Robinson S.W."/>
            <person name="Maslen C.L."/>
        </authorList>
    </citation>
    <scope>NUCLEOTIDE SEQUENCE [MRNA]</scope>
    <source>
        <tissue>Fibroblast</tissue>
    </source>
</reference>
<reference key="2">
    <citation type="journal article" date="2005" name="Science">
        <title>The transcriptional landscape of the mammalian genome.</title>
        <authorList>
            <person name="Carninci P."/>
            <person name="Kasukawa T."/>
            <person name="Katayama S."/>
            <person name="Gough J."/>
            <person name="Frith M.C."/>
            <person name="Maeda N."/>
            <person name="Oyama R."/>
            <person name="Ravasi T."/>
            <person name="Lenhard B."/>
            <person name="Wells C."/>
            <person name="Kodzius R."/>
            <person name="Shimokawa K."/>
            <person name="Bajic V.B."/>
            <person name="Brenner S.E."/>
            <person name="Batalov S."/>
            <person name="Forrest A.R."/>
            <person name="Zavolan M."/>
            <person name="Davis M.J."/>
            <person name="Wilming L.G."/>
            <person name="Aidinis V."/>
            <person name="Allen J.E."/>
            <person name="Ambesi-Impiombato A."/>
            <person name="Apweiler R."/>
            <person name="Aturaliya R.N."/>
            <person name="Bailey T.L."/>
            <person name="Bansal M."/>
            <person name="Baxter L."/>
            <person name="Beisel K.W."/>
            <person name="Bersano T."/>
            <person name="Bono H."/>
            <person name="Chalk A.M."/>
            <person name="Chiu K.P."/>
            <person name="Choudhary V."/>
            <person name="Christoffels A."/>
            <person name="Clutterbuck D.R."/>
            <person name="Crowe M.L."/>
            <person name="Dalla E."/>
            <person name="Dalrymple B.P."/>
            <person name="de Bono B."/>
            <person name="Della Gatta G."/>
            <person name="di Bernardo D."/>
            <person name="Down T."/>
            <person name="Engstrom P."/>
            <person name="Fagiolini M."/>
            <person name="Faulkner G."/>
            <person name="Fletcher C.F."/>
            <person name="Fukushima T."/>
            <person name="Furuno M."/>
            <person name="Futaki S."/>
            <person name="Gariboldi M."/>
            <person name="Georgii-Hemming P."/>
            <person name="Gingeras T.R."/>
            <person name="Gojobori T."/>
            <person name="Green R.E."/>
            <person name="Gustincich S."/>
            <person name="Harbers M."/>
            <person name="Hayashi Y."/>
            <person name="Hensch T.K."/>
            <person name="Hirokawa N."/>
            <person name="Hill D."/>
            <person name="Huminiecki L."/>
            <person name="Iacono M."/>
            <person name="Ikeo K."/>
            <person name="Iwama A."/>
            <person name="Ishikawa T."/>
            <person name="Jakt M."/>
            <person name="Kanapin A."/>
            <person name="Katoh M."/>
            <person name="Kawasawa Y."/>
            <person name="Kelso J."/>
            <person name="Kitamura H."/>
            <person name="Kitano H."/>
            <person name="Kollias G."/>
            <person name="Krishnan S.P."/>
            <person name="Kruger A."/>
            <person name="Kummerfeld S.K."/>
            <person name="Kurochkin I.V."/>
            <person name="Lareau L.F."/>
            <person name="Lazarevic D."/>
            <person name="Lipovich L."/>
            <person name="Liu J."/>
            <person name="Liuni S."/>
            <person name="McWilliam S."/>
            <person name="Madan Babu M."/>
            <person name="Madera M."/>
            <person name="Marchionni L."/>
            <person name="Matsuda H."/>
            <person name="Matsuzawa S."/>
            <person name="Miki H."/>
            <person name="Mignone F."/>
            <person name="Miyake S."/>
            <person name="Morris K."/>
            <person name="Mottagui-Tabar S."/>
            <person name="Mulder N."/>
            <person name="Nakano N."/>
            <person name="Nakauchi H."/>
            <person name="Ng P."/>
            <person name="Nilsson R."/>
            <person name="Nishiguchi S."/>
            <person name="Nishikawa S."/>
            <person name="Nori F."/>
            <person name="Ohara O."/>
            <person name="Okazaki Y."/>
            <person name="Orlando V."/>
            <person name="Pang K.C."/>
            <person name="Pavan W.J."/>
            <person name="Pavesi G."/>
            <person name="Pesole G."/>
            <person name="Petrovsky N."/>
            <person name="Piazza S."/>
            <person name="Reed J."/>
            <person name="Reid J.F."/>
            <person name="Ring B.Z."/>
            <person name="Ringwald M."/>
            <person name="Rost B."/>
            <person name="Ruan Y."/>
            <person name="Salzberg S.L."/>
            <person name="Sandelin A."/>
            <person name="Schneider C."/>
            <person name="Schoenbach C."/>
            <person name="Sekiguchi K."/>
            <person name="Semple C.A."/>
            <person name="Seno S."/>
            <person name="Sessa L."/>
            <person name="Sheng Y."/>
            <person name="Shibata Y."/>
            <person name="Shimada H."/>
            <person name="Shimada K."/>
            <person name="Silva D."/>
            <person name="Sinclair B."/>
            <person name="Sperling S."/>
            <person name="Stupka E."/>
            <person name="Sugiura K."/>
            <person name="Sultana R."/>
            <person name="Takenaka Y."/>
            <person name="Taki K."/>
            <person name="Tammoja K."/>
            <person name="Tan S.L."/>
            <person name="Tang S."/>
            <person name="Taylor M.S."/>
            <person name="Tegner J."/>
            <person name="Teichmann S.A."/>
            <person name="Ueda H.R."/>
            <person name="van Nimwegen E."/>
            <person name="Verardo R."/>
            <person name="Wei C.L."/>
            <person name="Yagi K."/>
            <person name="Yamanishi H."/>
            <person name="Zabarovsky E."/>
            <person name="Zhu S."/>
            <person name="Zimmer A."/>
            <person name="Hide W."/>
            <person name="Bult C."/>
            <person name="Grimmond S.M."/>
            <person name="Teasdale R.D."/>
            <person name="Liu E.T."/>
            <person name="Brusic V."/>
            <person name="Quackenbush J."/>
            <person name="Wahlestedt C."/>
            <person name="Mattick J.S."/>
            <person name="Hume D.A."/>
            <person name="Kai C."/>
            <person name="Sasaki D."/>
            <person name="Tomaru Y."/>
            <person name="Fukuda S."/>
            <person name="Kanamori-Katayama M."/>
            <person name="Suzuki M."/>
            <person name="Aoki J."/>
            <person name="Arakawa T."/>
            <person name="Iida J."/>
            <person name="Imamura K."/>
            <person name="Itoh M."/>
            <person name="Kato T."/>
            <person name="Kawaji H."/>
            <person name="Kawagashira N."/>
            <person name="Kawashima T."/>
            <person name="Kojima M."/>
            <person name="Kondo S."/>
            <person name="Konno H."/>
            <person name="Nakano K."/>
            <person name="Ninomiya N."/>
            <person name="Nishio T."/>
            <person name="Okada M."/>
            <person name="Plessy C."/>
            <person name="Shibata K."/>
            <person name="Shiraki T."/>
            <person name="Suzuki S."/>
            <person name="Tagami M."/>
            <person name="Waki K."/>
            <person name="Watahiki A."/>
            <person name="Okamura-Oho Y."/>
            <person name="Suzuki H."/>
            <person name="Kawai J."/>
            <person name="Hayashizaki Y."/>
        </authorList>
    </citation>
    <scope>NUCLEOTIDE SEQUENCE [LARGE SCALE MRNA]</scope>
    <source>
        <strain>C57BL/6J</strain>
    </source>
</reference>
<reference key="3">
    <citation type="journal article" date="2004" name="Genome Res.">
        <title>The status, quality, and expansion of the NIH full-length cDNA project: the Mammalian Gene Collection (MGC).</title>
        <authorList>
            <consortium name="The MGC Project Team"/>
        </authorList>
    </citation>
    <scope>NUCLEOTIDE SEQUENCE [LARGE SCALE MRNA]</scope>
    <source>
        <strain>FVB/N</strain>
        <tissue>Kidney</tissue>
        <tissue>Liver</tissue>
        <tissue>Mammary tumor</tissue>
    </source>
</reference>
<reference key="4">
    <citation type="journal article" date="2010" name="Cell">
        <title>A tissue-specific atlas of mouse protein phosphorylation and expression.</title>
        <authorList>
            <person name="Huttlin E.L."/>
            <person name="Jedrychowski M.P."/>
            <person name="Elias J.E."/>
            <person name="Goswami T."/>
            <person name="Rad R."/>
            <person name="Beausoleil S.A."/>
            <person name="Villen J."/>
            <person name="Haas W."/>
            <person name="Sowa M.E."/>
            <person name="Gygi S.P."/>
        </authorList>
    </citation>
    <scope>IDENTIFICATION BY MASS SPECTROMETRY [LARGE SCALE ANALYSIS]</scope>
    <source>
        <tissue>Brain</tissue>
        <tissue>Liver</tissue>
        <tissue>Lung</tissue>
        <tissue>Testis</tissue>
    </source>
</reference>
<reference key="5">
    <citation type="journal article" date="2018" name="Elife">
        <title>CRELD1 is an evolutionarily-conserved maturational enhancer of ionotropic acetylcholine receptors.</title>
        <authorList>
            <person name="D'Alessandro M."/>
            <person name="Richard M."/>
            <person name="Stigloher C."/>
            <person name="Gache V."/>
            <person name="Boulin T."/>
            <person name="Richmond J.E."/>
            <person name="Bessereau J.L."/>
        </authorList>
    </citation>
    <scope>FUNCTION</scope>
    <scope>TISSUE SPECIFICITY</scope>
</reference>
<gene>
    <name type="primary">Creld1</name>
</gene>